<dbReference type="EC" id="2.4.2.1" evidence="1"/>
<dbReference type="EC" id="2.4.2.2" evidence="1"/>
<dbReference type="EMBL" id="FM954973">
    <property type="protein sequence ID" value="CAV27545.1"/>
    <property type="molecule type" value="Genomic_DNA"/>
</dbReference>
<dbReference type="SMR" id="B7VTF8"/>
<dbReference type="STRING" id="575788.VS_II1412"/>
<dbReference type="KEGG" id="vsp:VS_II1412"/>
<dbReference type="eggNOG" id="COG3123">
    <property type="taxonomic scope" value="Bacteria"/>
</dbReference>
<dbReference type="HOGENOM" id="CLU_157874_0_0_6"/>
<dbReference type="Proteomes" id="UP000009100">
    <property type="component" value="Chromosome 2"/>
</dbReference>
<dbReference type="GO" id="GO:0005829">
    <property type="term" value="C:cytosol"/>
    <property type="evidence" value="ECO:0007669"/>
    <property type="project" value="TreeGrafter"/>
</dbReference>
<dbReference type="GO" id="GO:0047975">
    <property type="term" value="F:guanosine phosphorylase activity"/>
    <property type="evidence" value="ECO:0007669"/>
    <property type="project" value="UniProtKB-EC"/>
</dbReference>
<dbReference type="GO" id="GO:0004731">
    <property type="term" value="F:purine-nucleoside phosphorylase activity"/>
    <property type="evidence" value="ECO:0007669"/>
    <property type="project" value="UniProtKB-UniRule"/>
</dbReference>
<dbReference type="GO" id="GO:0009032">
    <property type="term" value="F:thymidine phosphorylase activity"/>
    <property type="evidence" value="ECO:0007669"/>
    <property type="project" value="UniProtKB-EC"/>
</dbReference>
<dbReference type="GO" id="GO:0004850">
    <property type="term" value="F:uridine phosphorylase activity"/>
    <property type="evidence" value="ECO:0007669"/>
    <property type="project" value="UniProtKB-EC"/>
</dbReference>
<dbReference type="CDD" id="cd20296">
    <property type="entry name" value="cupin_PpnP-like"/>
    <property type="match status" value="1"/>
</dbReference>
<dbReference type="FunFam" id="2.60.120.10:FF:000016">
    <property type="entry name" value="Pyrimidine/purine nucleoside phosphorylase"/>
    <property type="match status" value="1"/>
</dbReference>
<dbReference type="Gene3D" id="2.60.120.10">
    <property type="entry name" value="Jelly Rolls"/>
    <property type="match status" value="1"/>
</dbReference>
<dbReference type="HAMAP" id="MF_01537">
    <property type="entry name" value="Nucleos_phosphorylase_PpnP"/>
    <property type="match status" value="1"/>
</dbReference>
<dbReference type="InterPro" id="IPR009664">
    <property type="entry name" value="Ppnp"/>
</dbReference>
<dbReference type="InterPro" id="IPR014710">
    <property type="entry name" value="RmlC-like_jellyroll"/>
</dbReference>
<dbReference type="InterPro" id="IPR011051">
    <property type="entry name" value="RmlC_Cupin_sf"/>
</dbReference>
<dbReference type="PANTHER" id="PTHR36540">
    <property type="entry name" value="PYRIMIDINE/PURINE NUCLEOSIDE PHOSPHORYLASE"/>
    <property type="match status" value="1"/>
</dbReference>
<dbReference type="PANTHER" id="PTHR36540:SF1">
    <property type="entry name" value="PYRIMIDINE_PURINE NUCLEOSIDE PHOSPHORYLASE"/>
    <property type="match status" value="1"/>
</dbReference>
<dbReference type="Pfam" id="PF06865">
    <property type="entry name" value="Ppnp"/>
    <property type="match status" value="1"/>
</dbReference>
<dbReference type="SUPFAM" id="SSF51182">
    <property type="entry name" value="RmlC-like cupins"/>
    <property type="match status" value="1"/>
</dbReference>
<gene>
    <name evidence="1" type="primary">ppnP</name>
    <name type="ordered locus">VS_II1412</name>
</gene>
<keyword id="KW-0328">Glycosyltransferase</keyword>
<keyword id="KW-0808">Transferase</keyword>
<sequence length="93" mass="9963">MIKENTYFEGGVKSLAFNQSGADVSVGVMAAGEYTFGTAAPEKMTVVKGALIVKRVGDDDWTTFQSGESFDVAGDSSFDLQVKEATAYLCEYL</sequence>
<protein>
    <recommendedName>
        <fullName evidence="1">Pyrimidine/purine nucleoside phosphorylase</fullName>
        <ecNumber evidence="1">2.4.2.1</ecNumber>
        <ecNumber evidence="1">2.4.2.2</ecNumber>
    </recommendedName>
    <alternativeName>
        <fullName evidence="1">Adenosine phosphorylase</fullName>
    </alternativeName>
    <alternativeName>
        <fullName evidence="1">Cytidine phosphorylase</fullName>
    </alternativeName>
    <alternativeName>
        <fullName evidence="1">Guanosine phosphorylase</fullName>
    </alternativeName>
    <alternativeName>
        <fullName evidence="1">Inosine phosphorylase</fullName>
    </alternativeName>
    <alternativeName>
        <fullName evidence="1">Thymidine phosphorylase</fullName>
    </alternativeName>
    <alternativeName>
        <fullName evidence="1">Uridine phosphorylase</fullName>
    </alternativeName>
    <alternativeName>
        <fullName evidence="1">Xanthosine phosphorylase</fullName>
    </alternativeName>
</protein>
<proteinExistence type="inferred from homology"/>
<comment type="function">
    <text evidence="1">Catalyzes the phosphorolysis of diverse nucleosides, yielding D-ribose 1-phosphate and the respective free bases. Can use uridine, adenosine, guanosine, cytidine, thymidine, inosine and xanthosine as substrates. Also catalyzes the reverse reactions.</text>
</comment>
<comment type="catalytic activity">
    <reaction evidence="1">
        <text>a purine D-ribonucleoside + phosphate = a purine nucleobase + alpha-D-ribose 1-phosphate</text>
        <dbReference type="Rhea" id="RHEA:19805"/>
        <dbReference type="ChEBI" id="CHEBI:26386"/>
        <dbReference type="ChEBI" id="CHEBI:43474"/>
        <dbReference type="ChEBI" id="CHEBI:57720"/>
        <dbReference type="ChEBI" id="CHEBI:142355"/>
        <dbReference type="EC" id="2.4.2.1"/>
    </reaction>
</comment>
<comment type="catalytic activity">
    <reaction evidence="1">
        <text>adenosine + phosphate = alpha-D-ribose 1-phosphate + adenine</text>
        <dbReference type="Rhea" id="RHEA:27642"/>
        <dbReference type="ChEBI" id="CHEBI:16335"/>
        <dbReference type="ChEBI" id="CHEBI:16708"/>
        <dbReference type="ChEBI" id="CHEBI:43474"/>
        <dbReference type="ChEBI" id="CHEBI:57720"/>
        <dbReference type="EC" id="2.4.2.1"/>
    </reaction>
</comment>
<comment type="catalytic activity">
    <reaction evidence="1">
        <text>cytidine + phosphate = cytosine + alpha-D-ribose 1-phosphate</text>
        <dbReference type="Rhea" id="RHEA:52540"/>
        <dbReference type="ChEBI" id="CHEBI:16040"/>
        <dbReference type="ChEBI" id="CHEBI:17562"/>
        <dbReference type="ChEBI" id="CHEBI:43474"/>
        <dbReference type="ChEBI" id="CHEBI:57720"/>
        <dbReference type="EC" id="2.4.2.2"/>
    </reaction>
</comment>
<comment type="catalytic activity">
    <reaction evidence="1">
        <text>guanosine + phosphate = alpha-D-ribose 1-phosphate + guanine</text>
        <dbReference type="Rhea" id="RHEA:13233"/>
        <dbReference type="ChEBI" id="CHEBI:16235"/>
        <dbReference type="ChEBI" id="CHEBI:16750"/>
        <dbReference type="ChEBI" id="CHEBI:43474"/>
        <dbReference type="ChEBI" id="CHEBI:57720"/>
        <dbReference type="EC" id="2.4.2.1"/>
    </reaction>
</comment>
<comment type="catalytic activity">
    <reaction evidence="1">
        <text>inosine + phosphate = alpha-D-ribose 1-phosphate + hypoxanthine</text>
        <dbReference type="Rhea" id="RHEA:27646"/>
        <dbReference type="ChEBI" id="CHEBI:17368"/>
        <dbReference type="ChEBI" id="CHEBI:17596"/>
        <dbReference type="ChEBI" id="CHEBI:43474"/>
        <dbReference type="ChEBI" id="CHEBI:57720"/>
        <dbReference type="EC" id="2.4.2.1"/>
    </reaction>
</comment>
<comment type="catalytic activity">
    <reaction evidence="1">
        <text>thymidine + phosphate = 2-deoxy-alpha-D-ribose 1-phosphate + thymine</text>
        <dbReference type="Rhea" id="RHEA:16037"/>
        <dbReference type="ChEBI" id="CHEBI:17748"/>
        <dbReference type="ChEBI" id="CHEBI:17821"/>
        <dbReference type="ChEBI" id="CHEBI:43474"/>
        <dbReference type="ChEBI" id="CHEBI:57259"/>
        <dbReference type="EC" id="2.4.2.2"/>
    </reaction>
</comment>
<comment type="catalytic activity">
    <reaction evidence="1">
        <text>uridine + phosphate = alpha-D-ribose 1-phosphate + uracil</text>
        <dbReference type="Rhea" id="RHEA:24388"/>
        <dbReference type="ChEBI" id="CHEBI:16704"/>
        <dbReference type="ChEBI" id="CHEBI:17568"/>
        <dbReference type="ChEBI" id="CHEBI:43474"/>
        <dbReference type="ChEBI" id="CHEBI:57720"/>
        <dbReference type="EC" id="2.4.2.2"/>
    </reaction>
</comment>
<comment type="catalytic activity">
    <reaction evidence="1">
        <text>xanthosine + phosphate = alpha-D-ribose 1-phosphate + xanthine</text>
        <dbReference type="Rhea" id="RHEA:27638"/>
        <dbReference type="ChEBI" id="CHEBI:17712"/>
        <dbReference type="ChEBI" id="CHEBI:18107"/>
        <dbReference type="ChEBI" id="CHEBI:43474"/>
        <dbReference type="ChEBI" id="CHEBI:57720"/>
        <dbReference type="EC" id="2.4.2.1"/>
    </reaction>
</comment>
<comment type="similarity">
    <text evidence="1">Belongs to the nucleoside phosphorylase PpnP family.</text>
</comment>
<reference key="1">
    <citation type="submission" date="2009-02" db="EMBL/GenBank/DDBJ databases">
        <title>Vibrio splendidus str. LGP32 complete genome.</title>
        <authorList>
            <person name="Mazel D."/>
            <person name="Le Roux F."/>
        </authorList>
    </citation>
    <scope>NUCLEOTIDE SEQUENCE [LARGE SCALE GENOMIC DNA]</scope>
    <source>
        <strain>LGP32</strain>
    </source>
</reference>
<feature type="chain" id="PRO_1000185201" description="Pyrimidine/purine nucleoside phosphorylase">
    <location>
        <begin position="1"/>
        <end position="93"/>
    </location>
</feature>
<accession>B7VTF8</accession>
<organism>
    <name type="scientific">Vibrio atlanticus (strain LGP32)</name>
    <name type="common">Vibrio splendidus (strain Mel32)</name>
    <dbReference type="NCBI Taxonomy" id="575788"/>
    <lineage>
        <taxon>Bacteria</taxon>
        <taxon>Pseudomonadati</taxon>
        <taxon>Pseudomonadota</taxon>
        <taxon>Gammaproteobacteria</taxon>
        <taxon>Vibrionales</taxon>
        <taxon>Vibrionaceae</taxon>
        <taxon>Vibrio</taxon>
    </lineage>
</organism>
<name>PPNP_VIBA3</name>
<evidence type="ECO:0000255" key="1">
    <source>
        <dbReference type="HAMAP-Rule" id="MF_01537"/>
    </source>
</evidence>